<dbReference type="EMBL" id="BA000018">
    <property type="protein sequence ID" value="BAB43767.1"/>
    <property type="molecule type" value="Genomic_DNA"/>
</dbReference>
<dbReference type="PIR" id="E90075">
    <property type="entry name" value="E90075"/>
</dbReference>
<dbReference type="RefSeq" id="WP_000723836.1">
    <property type="nucleotide sequence ID" value="NC_002745.2"/>
</dbReference>
<dbReference type="EnsemblBacteria" id="BAB43767">
    <property type="protein sequence ID" value="BAB43767"/>
    <property type="gene ID" value="BAB43767"/>
</dbReference>
<dbReference type="KEGG" id="sau:SA2462"/>
<dbReference type="HOGENOM" id="CLU_064947_1_0_9"/>
<dbReference type="GO" id="GO:0005886">
    <property type="term" value="C:plasma membrane"/>
    <property type="evidence" value="ECO:0007669"/>
    <property type="project" value="UniProtKB-SubCell"/>
</dbReference>
<dbReference type="GO" id="GO:0016413">
    <property type="term" value="F:O-acetyltransferase activity"/>
    <property type="evidence" value="ECO:0007669"/>
    <property type="project" value="TreeGrafter"/>
</dbReference>
<dbReference type="GO" id="GO:0009246">
    <property type="term" value="P:enterobacterial common antigen biosynthetic process"/>
    <property type="evidence" value="ECO:0007669"/>
    <property type="project" value="TreeGrafter"/>
</dbReference>
<dbReference type="InterPro" id="IPR002656">
    <property type="entry name" value="Acyl_transf_3_dom"/>
</dbReference>
<dbReference type="PANTHER" id="PTHR40074">
    <property type="entry name" value="O-ACETYLTRANSFERASE WECH"/>
    <property type="match status" value="1"/>
</dbReference>
<dbReference type="PANTHER" id="PTHR40074:SF2">
    <property type="entry name" value="O-ACETYLTRANSFERASE WECH"/>
    <property type="match status" value="1"/>
</dbReference>
<dbReference type="Pfam" id="PF01757">
    <property type="entry name" value="Acyl_transf_3"/>
    <property type="match status" value="1"/>
</dbReference>
<keyword id="KW-1003">Cell membrane</keyword>
<keyword id="KW-0472">Membrane</keyword>
<keyword id="KW-0812">Transmembrane</keyword>
<keyword id="KW-1133">Transmembrane helix</keyword>
<keyword id="KW-0813">Transport</keyword>
<sequence length="350" mass="41344">MKKIRLELVYLRAIICAIIIITHLLTQITLKHENMEGGSLVLQFYIRNIVIFGTPCFIILSQLLTTLNYQKVTYRYLTTRVKYILIPYILMGLFYSYSESLLTDSSFNKQFIENVLLGQWYGYFIVVIMQFFILSYIIFKINYNLFNSKILLLLSFILQQSFLYYFTNNTAFHDTVLHYYPLSENTIIFGWIFYFFLGAYMGYNYERVLNFLERYLVIMIVLAVATYFVFIALANGDYWNVTSFSYSLTPYNSIMFIVILGICTHFKTMLFNTIQMISAFSFFIYLLHPIILDSLFAYTNIFEDNTMVFLAISLLFILGLCIGVGMILREFYIFRFIIGKQPYKLNINAY</sequence>
<proteinExistence type="inferred from homology"/>
<comment type="function">
    <text evidence="1">Presumably involved in the export of the biofilm adhesin polysaccharide poly-beta-1,6-N-acetyl-D-glucosamine (PNAG, also referred to as PIA) across the cell membrane.</text>
</comment>
<comment type="subcellular location">
    <subcellularLocation>
        <location evidence="3">Cell membrane</location>
        <topology evidence="3">Multi-pass membrane protein</topology>
    </subcellularLocation>
</comment>
<comment type="similarity">
    <text evidence="3">Belongs to the acyltransferase 3 family.</text>
</comment>
<accession>Q7A348</accession>
<reference key="1">
    <citation type="journal article" date="2001" name="Lancet">
        <title>Whole genome sequencing of meticillin-resistant Staphylococcus aureus.</title>
        <authorList>
            <person name="Kuroda M."/>
            <person name="Ohta T."/>
            <person name="Uchiyama I."/>
            <person name="Baba T."/>
            <person name="Yuzawa H."/>
            <person name="Kobayashi I."/>
            <person name="Cui L."/>
            <person name="Oguchi A."/>
            <person name="Aoki K."/>
            <person name="Nagai Y."/>
            <person name="Lian J.-Q."/>
            <person name="Ito T."/>
            <person name="Kanamori M."/>
            <person name="Matsumaru H."/>
            <person name="Maruyama A."/>
            <person name="Murakami H."/>
            <person name="Hosoyama A."/>
            <person name="Mizutani-Ui Y."/>
            <person name="Takahashi N.K."/>
            <person name="Sawano T."/>
            <person name="Inoue R."/>
            <person name="Kaito C."/>
            <person name="Sekimizu K."/>
            <person name="Hirakawa H."/>
            <person name="Kuhara S."/>
            <person name="Goto S."/>
            <person name="Yabuzaki J."/>
            <person name="Kanehisa M."/>
            <person name="Yamashita A."/>
            <person name="Oshima K."/>
            <person name="Furuya K."/>
            <person name="Yoshino C."/>
            <person name="Shiba T."/>
            <person name="Hattori M."/>
            <person name="Ogasawara N."/>
            <person name="Hayashi H."/>
            <person name="Hiramatsu K."/>
        </authorList>
    </citation>
    <scope>NUCLEOTIDE SEQUENCE [LARGE SCALE GENOMIC DNA]</scope>
    <source>
        <strain>N315</strain>
    </source>
</reference>
<name>ICAC_STAAN</name>
<protein>
    <recommendedName>
        <fullName>Probable poly-beta-1,6-N-acetyl-D-glucosamine export protein</fullName>
        <shortName>PGA export protein</shortName>
        <shortName>Poly-beta-1,6-GlcNAc export protein</shortName>
    </recommendedName>
    <alternativeName>
        <fullName>Biofilm polysaccharide intercellular adhesin export protein</fullName>
        <shortName>Biofilm PIA export protein</shortName>
    </alternativeName>
    <alternativeName>
        <fullName>Intercellular adhesion protein C</fullName>
    </alternativeName>
</protein>
<feature type="chain" id="PRO_0000208073" description="Probable poly-beta-1,6-N-acetyl-D-glucosamine export protein">
    <location>
        <begin position="1"/>
        <end position="350"/>
    </location>
</feature>
<feature type="transmembrane region" description="Helical" evidence="2">
    <location>
        <begin position="7"/>
        <end position="29"/>
    </location>
</feature>
<feature type="transmembrane region" description="Helical" evidence="2">
    <location>
        <begin position="44"/>
        <end position="66"/>
    </location>
</feature>
<feature type="transmembrane region" description="Helical" evidence="2">
    <location>
        <begin position="79"/>
        <end position="101"/>
    </location>
</feature>
<feature type="transmembrane region" description="Helical" evidence="2">
    <location>
        <begin position="116"/>
        <end position="138"/>
    </location>
</feature>
<feature type="transmembrane region" description="Helical" evidence="2">
    <location>
        <begin position="145"/>
        <end position="167"/>
    </location>
</feature>
<feature type="transmembrane region" description="Helical" evidence="2">
    <location>
        <begin position="187"/>
        <end position="204"/>
    </location>
</feature>
<feature type="transmembrane region" description="Helical" evidence="2">
    <location>
        <begin position="211"/>
        <end position="233"/>
    </location>
</feature>
<feature type="transmembrane region" description="Helical" evidence="2">
    <location>
        <begin position="243"/>
        <end position="262"/>
    </location>
</feature>
<feature type="transmembrane region" description="Helical" evidence="2">
    <location>
        <begin position="269"/>
        <end position="291"/>
    </location>
</feature>
<feature type="transmembrane region" description="Helical" evidence="2">
    <location>
        <begin position="306"/>
        <end position="328"/>
    </location>
</feature>
<organism>
    <name type="scientific">Staphylococcus aureus (strain N315)</name>
    <dbReference type="NCBI Taxonomy" id="158879"/>
    <lineage>
        <taxon>Bacteria</taxon>
        <taxon>Bacillati</taxon>
        <taxon>Bacillota</taxon>
        <taxon>Bacilli</taxon>
        <taxon>Bacillales</taxon>
        <taxon>Staphylococcaceae</taxon>
        <taxon>Staphylococcus</taxon>
    </lineage>
</organism>
<evidence type="ECO:0000250" key="1"/>
<evidence type="ECO:0000255" key="2"/>
<evidence type="ECO:0000305" key="3"/>
<gene>
    <name type="primary">icaC</name>
    <name type="ordered locus">SA2462</name>
</gene>